<proteinExistence type="inferred from homology"/>
<evidence type="ECO:0000255" key="1">
    <source>
        <dbReference type="HAMAP-Rule" id="MF_00539"/>
    </source>
</evidence>
<evidence type="ECO:0000256" key="2">
    <source>
        <dbReference type="SAM" id="MobiDB-lite"/>
    </source>
</evidence>
<evidence type="ECO:0000305" key="3"/>
<reference key="1">
    <citation type="journal article" date="2001" name="Nature">
        <title>Genome sequence of Yersinia pestis, the causative agent of plague.</title>
        <authorList>
            <person name="Parkhill J."/>
            <person name="Wren B.W."/>
            <person name="Thomson N.R."/>
            <person name="Titball R.W."/>
            <person name="Holden M.T.G."/>
            <person name="Prentice M.B."/>
            <person name="Sebaihia M."/>
            <person name="James K.D."/>
            <person name="Churcher C.M."/>
            <person name="Mungall K.L."/>
            <person name="Baker S."/>
            <person name="Basham D."/>
            <person name="Bentley S.D."/>
            <person name="Brooks K."/>
            <person name="Cerdeno-Tarraga A.-M."/>
            <person name="Chillingworth T."/>
            <person name="Cronin A."/>
            <person name="Davies R.M."/>
            <person name="Davis P."/>
            <person name="Dougan G."/>
            <person name="Feltwell T."/>
            <person name="Hamlin N."/>
            <person name="Holroyd S."/>
            <person name="Jagels K."/>
            <person name="Karlyshev A.V."/>
            <person name="Leather S."/>
            <person name="Moule S."/>
            <person name="Oyston P.C.F."/>
            <person name="Quail M.A."/>
            <person name="Rutherford K.M."/>
            <person name="Simmonds M."/>
            <person name="Skelton J."/>
            <person name="Stevens K."/>
            <person name="Whitehead S."/>
            <person name="Barrell B.G."/>
        </authorList>
    </citation>
    <scope>NUCLEOTIDE SEQUENCE [LARGE SCALE GENOMIC DNA]</scope>
    <source>
        <strain>CO-92 / Biovar Orientalis</strain>
    </source>
</reference>
<reference key="2">
    <citation type="journal article" date="2002" name="J. Bacteriol.">
        <title>Genome sequence of Yersinia pestis KIM.</title>
        <authorList>
            <person name="Deng W."/>
            <person name="Burland V."/>
            <person name="Plunkett G. III"/>
            <person name="Boutin A."/>
            <person name="Mayhew G.F."/>
            <person name="Liss P."/>
            <person name="Perna N.T."/>
            <person name="Rose D.J."/>
            <person name="Mau B."/>
            <person name="Zhou S."/>
            <person name="Schwartz D.C."/>
            <person name="Fetherston J.D."/>
            <person name="Lindler L.E."/>
            <person name="Brubaker R.R."/>
            <person name="Plano G.V."/>
            <person name="Straley S.C."/>
            <person name="McDonough K.A."/>
            <person name="Nilles M.L."/>
            <person name="Matson J.S."/>
            <person name="Blattner F.R."/>
            <person name="Perry R.D."/>
        </authorList>
    </citation>
    <scope>NUCLEOTIDE SEQUENCE [LARGE SCALE GENOMIC DNA]</scope>
    <source>
        <strain>KIM10+ / Biovar Mediaevalis</strain>
    </source>
</reference>
<reference key="3">
    <citation type="journal article" date="2004" name="DNA Res.">
        <title>Complete genome sequence of Yersinia pestis strain 91001, an isolate avirulent to humans.</title>
        <authorList>
            <person name="Song Y."/>
            <person name="Tong Z."/>
            <person name="Wang J."/>
            <person name="Wang L."/>
            <person name="Guo Z."/>
            <person name="Han Y."/>
            <person name="Zhang J."/>
            <person name="Pei D."/>
            <person name="Zhou D."/>
            <person name="Qin H."/>
            <person name="Pang X."/>
            <person name="Han Y."/>
            <person name="Zhai J."/>
            <person name="Li M."/>
            <person name="Cui B."/>
            <person name="Qi Z."/>
            <person name="Jin L."/>
            <person name="Dai R."/>
            <person name="Chen F."/>
            <person name="Li S."/>
            <person name="Ye C."/>
            <person name="Du Z."/>
            <person name="Lin W."/>
            <person name="Wang J."/>
            <person name="Yu J."/>
            <person name="Yang H."/>
            <person name="Wang J."/>
            <person name="Huang P."/>
            <person name="Yang R."/>
        </authorList>
    </citation>
    <scope>NUCLEOTIDE SEQUENCE [LARGE SCALE GENOMIC DNA]</scope>
    <source>
        <strain>91001 / Biovar Mediaevalis</strain>
    </source>
</reference>
<protein>
    <recommendedName>
        <fullName evidence="1">Large ribosomal subunit protein bL27</fullName>
    </recommendedName>
    <alternativeName>
        <fullName evidence="3">50S ribosomal protein L27</fullName>
    </alternativeName>
</protein>
<dbReference type="EMBL" id="AL590842">
    <property type="protein sequence ID" value="CAL22099.1"/>
    <property type="molecule type" value="Genomic_DNA"/>
</dbReference>
<dbReference type="EMBL" id="AE009952">
    <property type="protein sequence ID" value="AAM84261.1"/>
    <property type="molecule type" value="Genomic_DNA"/>
</dbReference>
<dbReference type="EMBL" id="AE017042">
    <property type="protein sequence ID" value="AAS60842.1"/>
    <property type="molecule type" value="Genomic_DNA"/>
</dbReference>
<dbReference type="PIR" id="AH0426">
    <property type="entry name" value="AH0426"/>
</dbReference>
<dbReference type="RefSeq" id="WP_002210179.1">
    <property type="nucleotide sequence ID" value="NZ_WUCM01000036.1"/>
</dbReference>
<dbReference type="RefSeq" id="YP_002348400.1">
    <property type="nucleotide sequence ID" value="NC_003143.1"/>
</dbReference>
<dbReference type="SMR" id="Q8ZBA7"/>
<dbReference type="STRING" id="214092.YPO3511"/>
<dbReference type="PaxDb" id="214092-YPO3511"/>
<dbReference type="DNASU" id="1145620"/>
<dbReference type="EnsemblBacteria" id="AAS60842">
    <property type="protein sequence ID" value="AAS60842"/>
    <property type="gene ID" value="YP_0572"/>
</dbReference>
<dbReference type="GeneID" id="97457883"/>
<dbReference type="KEGG" id="ype:YPO3511"/>
<dbReference type="KEGG" id="ypk:y0673"/>
<dbReference type="KEGG" id="ypm:YP_0572"/>
<dbReference type="PATRIC" id="fig|214092.21.peg.4005"/>
<dbReference type="eggNOG" id="COG0211">
    <property type="taxonomic scope" value="Bacteria"/>
</dbReference>
<dbReference type="HOGENOM" id="CLU_095424_4_1_6"/>
<dbReference type="OMA" id="GKDHTLH"/>
<dbReference type="OrthoDB" id="9803474at2"/>
<dbReference type="Proteomes" id="UP000000815">
    <property type="component" value="Chromosome"/>
</dbReference>
<dbReference type="Proteomes" id="UP000001019">
    <property type="component" value="Chromosome"/>
</dbReference>
<dbReference type="Proteomes" id="UP000002490">
    <property type="component" value="Chromosome"/>
</dbReference>
<dbReference type="GO" id="GO:0022625">
    <property type="term" value="C:cytosolic large ribosomal subunit"/>
    <property type="evidence" value="ECO:0000318"/>
    <property type="project" value="GO_Central"/>
</dbReference>
<dbReference type="GO" id="GO:0003735">
    <property type="term" value="F:structural constituent of ribosome"/>
    <property type="evidence" value="ECO:0000318"/>
    <property type="project" value="GO_Central"/>
</dbReference>
<dbReference type="GO" id="GO:0006412">
    <property type="term" value="P:translation"/>
    <property type="evidence" value="ECO:0007669"/>
    <property type="project" value="UniProtKB-UniRule"/>
</dbReference>
<dbReference type="FunFam" id="2.40.50.100:FF:000001">
    <property type="entry name" value="50S ribosomal protein L27"/>
    <property type="match status" value="1"/>
</dbReference>
<dbReference type="Gene3D" id="2.40.50.100">
    <property type="match status" value="1"/>
</dbReference>
<dbReference type="HAMAP" id="MF_00539">
    <property type="entry name" value="Ribosomal_bL27"/>
    <property type="match status" value="1"/>
</dbReference>
<dbReference type="InterPro" id="IPR001684">
    <property type="entry name" value="Ribosomal_bL27"/>
</dbReference>
<dbReference type="InterPro" id="IPR018261">
    <property type="entry name" value="Ribosomal_bL27_CS"/>
</dbReference>
<dbReference type="NCBIfam" id="TIGR00062">
    <property type="entry name" value="L27"/>
    <property type="match status" value="1"/>
</dbReference>
<dbReference type="PANTHER" id="PTHR15893:SF0">
    <property type="entry name" value="LARGE RIBOSOMAL SUBUNIT PROTEIN BL27M"/>
    <property type="match status" value="1"/>
</dbReference>
<dbReference type="PANTHER" id="PTHR15893">
    <property type="entry name" value="RIBOSOMAL PROTEIN L27"/>
    <property type="match status" value="1"/>
</dbReference>
<dbReference type="Pfam" id="PF01016">
    <property type="entry name" value="Ribosomal_L27"/>
    <property type="match status" value="1"/>
</dbReference>
<dbReference type="PRINTS" id="PR00063">
    <property type="entry name" value="RIBOSOMALL27"/>
</dbReference>
<dbReference type="SUPFAM" id="SSF110324">
    <property type="entry name" value="Ribosomal L27 protein-like"/>
    <property type="match status" value="1"/>
</dbReference>
<dbReference type="PROSITE" id="PS00831">
    <property type="entry name" value="RIBOSOMAL_L27"/>
    <property type="match status" value="1"/>
</dbReference>
<sequence length="85" mass="9124">MAHKKAGGSTRNGRDSESKRLGVKRFGGEAVLAGSIIVRQRGTKFHAGINVGCGKDHTLFALADGKVKFEVKGPKNRKFISIEAE</sequence>
<feature type="chain" id="PRO_0000181213" description="Large ribosomal subunit protein bL27">
    <location>
        <begin position="1"/>
        <end position="85"/>
    </location>
</feature>
<feature type="region of interest" description="Disordered" evidence="2">
    <location>
        <begin position="1"/>
        <end position="20"/>
    </location>
</feature>
<organism>
    <name type="scientific">Yersinia pestis</name>
    <dbReference type="NCBI Taxonomy" id="632"/>
    <lineage>
        <taxon>Bacteria</taxon>
        <taxon>Pseudomonadati</taxon>
        <taxon>Pseudomonadota</taxon>
        <taxon>Gammaproteobacteria</taxon>
        <taxon>Enterobacterales</taxon>
        <taxon>Yersiniaceae</taxon>
        <taxon>Yersinia</taxon>
    </lineage>
</organism>
<name>RL27_YERPE</name>
<gene>
    <name evidence="1" type="primary">rpmA</name>
    <name type="ordered locus">YPO3511</name>
    <name type="ordered locus">y0673</name>
    <name type="ordered locus">YP_0572</name>
</gene>
<keyword id="KW-1185">Reference proteome</keyword>
<keyword id="KW-0687">Ribonucleoprotein</keyword>
<keyword id="KW-0689">Ribosomal protein</keyword>
<comment type="similarity">
    <text evidence="1">Belongs to the bacterial ribosomal protein bL27 family.</text>
</comment>
<accession>Q8ZBA7</accession>
<accession>Q0WBD8</accession>